<reference key="1">
    <citation type="journal article" date="1992" name="J. Mol. Biol.">
        <title>Gene organization deduced from the complete sequence of liverwort Marchantia polymorpha mitochondrial DNA. A primitive form of plant mitochondrial genome.</title>
        <authorList>
            <person name="Oda K."/>
            <person name="Yamato K."/>
            <person name="Ohta E."/>
            <person name="Nakamura Y."/>
            <person name="Takemura M."/>
            <person name="Nozato N."/>
            <person name="Akashi K."/>
            <person name="Kanegae T."/>
            <person name="Ogura Y."/>
            <person name="Kohchi T."/>
            <person name="Ohyama K."/>
        </authorList>
    </citation>
    <scope>NUCLEOTIDE SEQUENCE [GENOMIC DNA]</scope>
</reference>
<protein>
    <recommendedName>
        <fullName>Uncharacterized mitochondrial protein ymf13</fullName>
    </recommendedName>
    <alternativeName>
        <fullName>ORF154</fullName>
    </alternativeName>
</protein>
<keyword id="KW-0496">Mitochondrion</keyword>
<name>YMF13_MARPO</name>
<evidence type="ECO:0000305" key="1"/>
<geneLocation type="mitochondrion"/>
<accession>P38457</accession>
<comment type="subcellular location">
    <subcellularLocation>
        <location evidence="1">Mitochondrion</location>
    </subcellularLocation>
</comment>
<dbReference type="EMBL" id="M68929">
    <property type="protein sequence ID" value="AAC09439.1"/>
    <property type="molecule type" value="Genomic_DNA"/>
</dbReference>
<dbReference type="PIR" id="S25994">
    <property type="entry name" value="S25994"/>
</dbReference>
<dbReference type="GO" id="GO:0005739">
    <property type="term" value="C:mitochondrion"/>
    <property type="evidence" value="ECO:0007669"/>
    <property type="project" value="UniProtKB-SubCell"/>
</dbReference>
<gene>
    <name type="primary">YMF13</name>
</gene>
<proteinExistence type="predicted"/>
<sequence>MDIVTEHLKRGRYYAPGKHAGPTCFSKNISKNNAFRAKIKDLNRKIESVFFGCAHNQPLIALVYYKQREQIVRESKLQGKNTRIELSFLLRNLTSEDPNSTYTKEKIYELITDYHDGRQELLFFFWNHLVDTVNFTEILVDRKSGKEVSAISAN</sequence>
<feature type="chain" id="PRO_0000196837" description="Uncharacterized mitochondrial protein ymf13">
    <location>
        <begin position="1"/>
        <end position="154"/>
    </location>
</feature>
<organism>
    <name type="scientific">Marchantia polymorpha</name>
    <name type="common">Common liverwort</name>
    <name type="synonym">Marchantia aquatica</name>
    <dbReference type="NCBI Taxonomy" id="3197"/>
    <lineage>
        <taxon>Eukaryota</taxon>
        <taxon>Viridiplantae</taxon>
        <taxon>Streptophyta</taxon>
        <taxon>Embryophyta</taxon>
        <taxon>Marchantiophyta</taxon>
        <taxon>Marchantiopsida</taxon>
        <taxon>Marchantiidae</taxon>
        <taxon>Marchantiales</taxon>
        <taxon>Marchantiaceae</taxon>
        <taxon>Marchantia</taxon>
    </lineage>
</organism>